<feature type="chain" id="PRO_1000016565" description="tRNA uridine 5-carboxymethylaminomethyl modification enzyme MnmG">
    <location>
        <begin position="1"/>
        <end position="657"/>
    </location>
</feature>
<feature type="region of interest" description="Disordered" evidence="2">
    <location>
        <begin position="636"/>
        <end position="657"/>
    </location>
</feature>
<feature type="binding site" evidence="1">
    <location>
        <begin position="13"/>
        <end position="18"/>
    </location>
    <ligand>
        <name>FAD</name>
        <dbReference type="ChEBI" id="CHEBI:57692"/>
    </ligand>
</feature>
<feature type="binding site" evidence="1">
    <location>
        <begin position="274"/>
        <end position="288"/>
    </location>
    <ligand>
        <name>NAD(+)</name>
        <dbReference type="ChEBI" id="CHEBI:57540"/>
    </ligand>
</feature>
<reference key="1">
    <citation type="journal article" date="2010" name="Genome Biol. Evol.">
        <title>Continuing evolution of Burkholderia mallei through genome reduction and large-scale rearrangements.</title>
        <authorList>
            <person name="Losada L."/>
            <person name="Ronning C.M."/>
            <person name="DeShazer D."/>
            <person name="Woods D."/>
            <person name="Fedorova N."/>
            <person name="Kim H.S."/>
            <person name="Shabalina S.A."/>
            <person name="Pearson T.R."/>
            <person name="Brinkac L."/>
            <person name="Tan P."/>
            <person name="Nandi T."/>
            <person name="Crabtree J."/>
            <person name="Badger J."/>
            <person name="Beckstrom-Sternberg S."/>
            <person name="Saqib M."/>
            <person name="Schutzer S.E."/>
            <person name="Keim P."/>
            <person name="Nierman W.C."/>
        </authorList>
    </citation>
    <scope>NUCLEOTIDE SEQUENCE [LARGE SCALE GENOMIC DNA]</scope>
    <source>
        <strain>SAVP1</strain>
    </source>
</reference>
<sequence length="657" mass="71981">MLYPTEFDVIVVGGGHAGTEAALASARMGAKTLLLTHNIETLGQMSCNPSIGGIGKGHLVKEVDALGGAMAAATDEGGIQFRILNSSKGPAVRATRAQADRVLYKQAIRRRLENQPNLWLFQQAVDDLMVEGDRVVGAVTQVGVRFRARAVVLTAGTFLDGKIHVGLNHYTGGRAGDPAAVSLSSRLKELNLPQGRLKTGTPPRIDGRTIDFSKLDEQPGDLDPIPVFSFLGRAEQHPQQLPCWVTHTNERTHDIIRSGLDRSPMYTGVIEGVGPRYCPSIEDKIHRFASKDSHQIFLEPEGLTTNEFYPNGISTSLPFDVQLALVHSMRGLEQAHILRPGYAIEYDYFDPRALKSSLETKAIGGLFFAGQINGTTGYEEAAAQGLLAGINAGRYAQEKDAWCPRRDQAYLGVLVDDLVTRGVSEPYRMFTSRAEYRLSLREDNADMRLTEIGRELGVVDDVRWDAFNRKRDAVSRETERLRTTWVTPKTLPADEATALLGKPIDHEYSLAELLRRPGVSYDGVCGLRGGECGPSEPLAEDELLLAQIKEQIEIGIKYQGYIERQAGEIERNGANENTRLPDGIDYTEVRGLSFEVSQKLNQFRPETIGQASRISGMTPAAISLLMVHLKKRGLGRRKGADSVPGADVQADNTAAQQ</sequence>
<keyword id="KW-0963">Cytoplasm</keyword>
<keyword id="KW-0274">FAD</keyword>
<keyword id="KW-0285">Flavoprotein</keyword>
<keyword id="KW-0520">NAD</keyword>
<keyword id="KW-0819">tRNA processing</keyword>
<protein>
    <recommendedName>
        <fullName evidence="1">tRNA uridine 5-carboxymethylaminomethyl modification enzyme MnmG</fullName>
    </recommendedName>
    <alternativeName>
        <fullName evidence="1">Glucose-inhibited division protein A</fullName>
    </alternativeName>
</protein>
<proteinExistence type="inferred from homology"/>
<accession>A1V8U3</accession>
<evidence type="ECO:0000255" key="1">
    <source>
        <dbReference type="HAMAP-Rule" id="MF_00129"/>
    </source>
</evidence>
<evidence type="ECO:0000256" key="2">
    <source>
        <dbReference type="SAM" id="MobiDB-lite"/>
    </source>
</evidence>
<comment type="function">
    <text evidence="1">NAD-binding protein involved in the addition of a carboxymethylaminomethyl (cmnm) group at the wobble position (U34) of certain tRNAs, forming tRNA-cmnm(5)s(2)U34.</text>
</comment>
<comment type="cofactor">
    <cofactor evidence="1">
        <name>FAD</name>
        <dbReference type="ChEBI" id="CHEBI:57692"/>
    </cofactor>
</comment>
<comment type="subunit">
    <text evidence="1">Homodimer. Heterotetramer of two MnmE and two MnmG subunits.</text>
</comment>
<comment type="subcellular location">
    <subcellularLocation>
        <location evidence="1">Cytoplasm</location>
    </subcellularLocation>
</comment>
<comment type="similarity">
    <text evidence="1">Belongs to the MnmG family.</text>
</comment>
<organism>
    <name type="scientific">Burkholderia mallei (strain SAVP1)</name>
    <dbReference type="NCBI Taxonomy" id="320388"/>
    <lineage>
        <taxon>Bacteria</taxon>
        <taxon>Pseudomonadati</taxon>
        <taxon>Pseudomonadota</taxon>
        <taxon>Betaproteobacteria</taxon>
        <taxon>Burkholderiales</taxon>
        <taxon>Burkholderiaceae</taxon>
        <taxon>Burkholderia</taxon>
        <taxon>pseudomallei group</taxon>
    </lineage>
</organism>
<dbReference type="EMBL" id="CP000526">
    <property type="protein sequence ID" value="ABM49638.1"/>
    <property type="molecule type" value="Genomic_DNA"/>
</dbReference>
<dbReference type="RefSeq" id="WP_004195816.1">
    <property type="nucleotide sequence ID" value="NC_008785.1"/>
</dbReference>
<dbReference type="SMR" id="A1V8U3"/>
<dbReference type="GeneID" id="93062036"/>
<dbReference type="KEGG" id="bmv:BMASAVP1_A3367"/>
<dbReference type="HOGENOM" id="CLU_007831_2_2_4"/>
<dbReference type="GO" id="GO:0005829">
    <property type="term" value="C:cytosol"/>
    <property type="evidence" value="ECO:0007669"/>
    <property type="project" value="TreeGrafter"/>
</dbReference>
<dbReference type="GO" id="GO:0050660">
    <property type="term" value="F:flavin adenine dinucleotide binding"/>
    <property type="evidence" value="ECO:0007669"/>
    <property type="project" value="UniProtKB-UniRule"/>
</dbReference>
<dbReference type="GO" id="GO:0030488">
    <property type="term" value="P:tRNA methylation"/>
    <property type="evidence" value="ECO:0007669"/>
    <property type="project" value="TreeGrafter"/>
</dbReference>
<dbReference type="GO" id="GO:0002098">
    <property type="term" value="P:tRNA wobble uridine modification"/>
    <property type="evidence" value="ECO:0007669"/>
    <property type="project" value="InterPro"/>
</dbReference>
<dbReference type="FunFam" id="1.10.10.1800:FF:000001">
    <property type="entry name" value="tRNA uridine 5-carboxymethylaminomethyl modification enzyme MnmG"/>
    <property type="match status" value="1"/>
</dbReference>
<dbReference type="FunFam" id="1.10.150.570:FF:000001">
    <property type="entry name" value="tRNA uridine 5-carboxymethylaminomethyl modification enzyme MnmG"/>
    <property type="match status" value="1"/>
</dbReference>
<dbReference type="FunFam" id="3.50.50.60:FF:000002">
    <property type="entry name" value="tRNA uridine 5-carboxymethylaminomethyl modification enzyme MnmG"/>
    <property type="match status" value="1"/>
</dbReference>
<dbReference type="FunFam" id="3.50.50.60:FF:000010">
    <property type="entry name" value="tRNA uridine 5-carboxymethylaminomethyl modification enzyme MnmG"/>
    <property type="match status" value="1"/>
</dbReference>
<dbReference type="Gene3D" id="3.50.50.60">
    <property type="entry name" value="FAD/NAD(P)-binding domain"/>
    <property type="match status" value="2"/>
</dbReference>
<dbReference type="Gene3D" id="1.10.150.570">
    <property type="entry name" value="GidA associated domain, C-terminal subdomain"/>
    <property type="match status" value="1"/>
</dbReference>
<dbReference type="Gene3D" id="1.10.10.1800">
    <property type="entry name" value="tRNA uridine 5-carboxymethylaminomethyl modification enzyme MnmG/GidA"/>
    <property type="match status" value="1"/>
</dbReference>
<dbReference type="HAMAP" id="MF_00129">
    <property type="entry name" value="MnmG_GidA"/>
    <property type="match status" value="1"/>
</dbReference>
<dbReference type="InterPro" id="IPR036188">
    <property type="entry name" value="FAD/NAD-bd_sf"/>
</dbReference>
<dbReference type="InterPro" id="IPR049312">
    <property type="entry name" value="GIDA_C_N"/>
</dbReference>
<dbReference type="InterPro" id="IPR004416">
    <property type="entry name" value="MnmG"/>
</dbReference>
<dbReference type="InterPro" id="IPR002218">
    <property type="entry name" value="MnmG-rel"/>
</dbReference>
<dbReference type="InterPro" id="IPR020595">
    <property type="entry name" value="MnmG-rel_CS"/>
</dbReference>
<dbReference type="InterPro" id="IPR026904">
    <property type="entry name" value="MnmG_C"/>
</dbReference>
<dbReference type="InterPro" id="IPR047001">
    <property type="entry name" value="MnmG_C_subdom"/>
</dbReference>
<dbReference type="InterPro" id="IPR044920">
    <property type="entry name" value="MnmG_C_subdom_sf"/>
</dbReference>
<dbReference type="InterPro" id="IPR040131">
    <property type="entry name" value="MnmG_N"/>
</dbReference>
<dbReference type="NCBIfam" id="TIGR00136">
    <property type="entry name" value="mnmG_gidA"/>
    <property type="match status" value="1"/>
</dbReference>
<dbReference type="PANTHER" id="PTHR11806">
    <property type="entry name" value="GLUCOSE INHIBITED DIVISION PROTEIN A"/>
    <property type="match status" value="1"/>
</dbReference>
<dbReference type="PANTHER" id="PTHR11806:SF0">
    <property type="entry name" value="PROTEIN MTO1 HOMOLOG, MITOCHONDRIAL"/>
    <property type="match status" value="1"/>
</dbReference>
<dbReference type="Pfam" id="PF01134">
    <property type="entry name" value="GIDA"/>
    <property type="match status" value="1"/>
</dbReference>
<dbReference type="Pfam" id="PF21680">
    <property type="entry name" value="GIDA_C_1st"/>
    <property type="match status" value="1"/>
</dbReference>
<dbReference type="Pfam" id="PF13932">
    <property type="entry name" value="SAM_GIDA_C"/>
    <property type="match status" value="1"/>
</dbReference>
<dbReference type="SMART" id="SM01228">
    <property type="entry name" value="GIDA_assoc_3"/>
    <property type="match status" value="1"/>
</dbReference>
<dbReference type="SUPFAM" id="SSF51905">
    <property type="entry name" value="FAD/NAD(P)-binding domain"/>
    <property type="match status" value="1"/>
</dbReference>
<dbReference type="PROSITE" id="PS01280">
    <property type="entry name" value="GIDA_1"/>
    <property type="match status" value="1"/>
</dbReference>
<dbReference type="PROSITE" id="PS01281">
    <property type="entry name" value="GIDA_2"/>
    <property type="match status" value="1"/>
</dbReference>
<name>MNMG_BURMS</name>
<gene>
    <name evidence="1" type="primary">mnmG</name>
    <name evidence="1" type="synonym">gidA</name>
    <name type="ordered locus">BMASAVP1_A3367</name>
</gene>